<name>DER_SACD2</name>
<comment type="function">
    <text evidence="1">GTPase that plays an essential role in the late steps of ribosome biogenesis.</text>
</comment>
<comment type="subunit">
    <text evidence="1">Associates with the 50S ribosomal subunit.</text>
</comment>
<comment type="similarity">
    <text evidence="1">Belongs to the TRAFAC class TrmE-Era-EngA-EngB-Septin-like GTPase superfamily. EngA (Der) GTPase family.</text>
</comment>
<evidence type="ECO:0000255" key="1">
    <source>
        <dbReference type="HAMAP-Rule" id="MF_00195"/>
    </source>
</evidence>
<evidence type="ECO:0000256" key="2">
    <source>
        <dbReference type="SAM" id="MobiDB-lite"/>
    </source>
</evidence>
<accession>Q21KS9</accession>
<dbReference type="EMBL" id="CP000282">
    <property type="protein sequence ID" value="ABD80700.1"/>
    <property type="molecule type" value="Genomic_DNA"/>
</dbReference>
<dbReference type="RefSeq" id="WP_011467920.1">
    <property type="nucleotide sequence ID" value="NC_007912.1"/>
</dbReference>
<dbReference type="SMR" id="Q21KS9"/>
<dbReference type="STRING" id="203122.Sde_1438"/>
<dbReference type="GeneID" id="98613114"/>
<dbReference type="KEGG" id="sde:Sde_1438"/>
<dbReference type="eggNOG" id="COG1160">
    <property type="taxonomic scope" value="Bacteria"/>
</dbReference>
<dbReference type="HOGENOM" id="CLU_016077_6_2_6"/>
<dbReference type="OrthoDB" id="9805918at2"/>
<dbReference type="Proteomes" id="UP000001947">
    <property type="component" value="Chromosome"/>
</dbReference>
<dbReference type="GO" id="GO:0005525">
    <property type="term" value="F:GTP binding"/>
    <property type="evidence" value="ECO:0007669"/>
    <property type="project" value="UniProtKB-UniRule"/>
</dbReference>
<dbReference type="GO" id="GO:0043022">
    <property type="term" value="F:ribosome binding"/>
    <property type="evidence" value="ECO:0007669"/>
    <property type="project" value="TreeGrafter"/>
</dbReference>
<dbReference type="GO" id="GO:0042254">
    <property type="term" value="P:ribosome biogenesis"/>
    <property type="evidence" value="ECO:0007669"/>
    <property type="project" value="UniProtKB-KW"/>
</dbReference>
<dbReference type="CDD" id="cd01894">
    <property type="entry name" value="EngA1"/>
    <property type="match status" value="1"/>
</dbReference>
<dbReference type="CDD" id="cd01895">
    <property type="entry name" value="EngA2"/>
    <property type="match status" value="1"/>
</dbReference>
<dbReference type="FunFam" id="3.30.300.20:FF:000004">
    <property type="entry name" value="GTPase Der"/>
    <property type="match status" value="1"/>
</dbReference>
<dbReference type="FunFam" id="3.40.50.300:FF:000040">
    <property type="entry name" value="GTPase Der"/>
    <property type="match status" value="1"/>
</dbReference>
<dbReference type="FunFam" id="3.40.50.300:FF:000057">
    <property type="entry name" value="GTPase Der"/>
    <property type="match status" value="1"/>
</dbReference>
<dbReference type="Gene3D" id="3.30.300.20">
    <property type="match status" value="1"/>
</dbReference>
<dbReference type="Gene3D" id="3.40.50.300">
    <property type="entry name" value="P-loop containing nucleotide triphosphate hydrolases"/>
    <property type="match status" value="2"/>
</dbReference>
<dbReference type="HAMAP" id="MF_00195">
    <property type="entry name" value="GTPase_Der"/>
    <property type="match status" value="1"/>
</dbReference>
<dbReference type="InterPro" id="IPR031166">
    <property type="entry name" value="G_ENGA"/>
</dbReference>
<dbReference type="InterPro" id="IPR006073">
    <property type="entry name" value="GTP-bd"/>
</dbReference>
<dbReference type="InterPro" id="IPR016484">
    <property type="entry name" value="GTPase_Der"/>
</dbReference>
<dbReference type="InterPro" id="IPR032859">
    <property type="entry name" value="KH_dom-like"/>
</dbReference>
<dbReference type="InterPro" id="IPR015946">
    <property type="entry name" value="KH_dom-like_a/b"/>
</dbReference>
<dbReference type="InterPro" id="IPR027417">
    <property type="entry name" value="P-loop_NTPase"/>
</dbReference>
<dbReference type="InterPro" id="IPR005225">
    <property type="entry name" value="Small_GTP-bd"/>
</dbReference>
<dbReference type="NCBIfam" id="TIGR03594">
    <property type="entry name" value="GTPase_EngA"/>
    <property type="match status" value="1"/>
</dbReference>
<dbReference type="NCBIfam" id="TIGR00231">
    <property type="entry name" value="small_GTP"/>
    <property type="match status" value="2"/>
</dbReference>
<dbReference type="PANTHER" id="PTHR43834">
    <property type="entry name" value="GTPASE DER"/>
    <property type="match status" value="1"/>
</dbReference>
<dbReference type="PANTHER" id="PTHR43834:SF6">
    <property type="entry name" value="GTPASE DER"/>
    <property type="match status" value="1"/>
</dbReference>
<dbReference type="Pfam" id="PF14714">
    <property type="entry name" value="KH_dom-like"/>
    <property type="match status" value="1"/>
</dbReference>
<dbReference type="Pfam" id="PF01926">
    <property type="entry name" value="MMR_HSR1"/>
    <property type="match status" value="2"/>
</dbReference>
<dbReference type="PIRSF" id="PIRSF006485">
    <property type="entry name" value="GTP-binding_EngA"/>
    <property type="match status" value="1"/>
</dbReference>
<dbReference type="PRINTS" id="PR00326">
    <property type="entry name" value="GTP1OBG"/>
</dbReference>
<dbReference type="SUPFAM" id="SSF52540">
    <property type="entry name" value="P-loop containing nucleoside triphosphate hydrolases"/>
    <property type="match status" value="2"/>
</dbReference>
<dbReference type="PROSITE" id="PS51712">
    <property type="entry name" value="G_ENGA"/>
    <property type="match status" value="2"/>
</dbReference>
<sequence length="471" mass="52079">MIPTLALVGRPNVGKSTLFNRLTRSRDAIVANFSGLTRDRQYGEATHGDKRFIVVDTGGISGEEEGIDSYMAGQSLQAIEEADMVAFIVDARVGLTAADMQIAQHLRTCNKPIFLLANKVDGVNESIVCAPFFELGLGDVIGIAAAHGRNINTMLDTVLENVEPEAEASEEDKAKGIKLAIVGRPNVGKSTLVNRMLGEDRVVVYDMPGTTRDSIYIEYERDGKAYTIIDTAGVRRRKNIKLSVEKFSIVKTLQAIDDANVVILVMDAQEGIVDQDLHLMGHVIDSGRALVVALNKWDNLDNDHKSYVKTELSRRLQFVDFADLHFISALHGTGVGDLYKSVHKAYSSATEKLNTNFLTKILEFAVSQHQPPLVNGRRIKLRYAHAGGQNPPIIVIHGNQTAAVPKNYVRYLEKIFRKELELHGTPIRFEFKSSENPFAGRKNAMSKKPEHPSRRANSGGKSINRRPRPKS</sequence>
<reference key="1">
    <citation type="journal article" date="2008" name="PLoS Genet.">
        <title>Complete genome sequence of the complex carbohydrate-degrading marine bacterium, Saccharophagus degradans strain 2-40 T.</title>
        <authorList>
            <person name="Weiner R.M."/>
            <person name="Taylor L.E. II"/>
            <person name="Henrissat B."/>
            <person name="Hauser L."/>
            <person name="Land M."/>
            <person name="Coutinho P.M."/>
            <person name="Rancurel C."/>
            <person name="Saunders E.H."/>
            <person name="Longmire A.G."/>
            <person name="Zhang H."/>
            <person name="Bayer E.A."/>
            <person name="Gilbert H.J."/>
            <person name="Larimer F."/>
            <person name="Zhulin I.B."/>
            <person name="Ekborg N.A."/>
            <person name="Lamed R."/>
            <person name="Richardson P.M."/>
            <person name="Borovok I."/>
            <person name="Hutcheson S."/>
        </authorList>
    </citation>
    <scope>NUCLEOTIDE SEQUENCE [LARGE SCALE GENOMIC DNA]</scope>
    <source>
        <strain>2-40 / ATCC 43961 / DSM 17024</strain>
    </source>
</reference>
<organism>
    <name type="scientific">Saccharophagus degradans (strain 2-40 / ATCC 43961 / DSM 17024)</name>
    <dbReference type="NCBI Taxonomy" id="203122"/>
    <lineage>
        <taxon>Bacteria</taxon>
        <taxon>Pseudomonadati</taxon>
        <taxon>Pseudomonadota</taxon>
        <taxon>Gammaproteobacteria</taxon>
        <taxon>Cellvibrionales</taxon>
        <taxon>Cellvibrionaceae</taxon>
        <taxon>Saccharophagus</taxon>
    </lineage>
</organism>
<proteinExistence type="inferred from homology"/>
<keyword id="KW-0342">GTP-binding</keyword>
<keyword id="KW-0547">Nucleotide-binding</keyword>
<keyword id="KW-1185">Reference proteome</keyword>
<keyword id="KW-0677">Repeat</keyword>
<keyword id="KW-0690">Ribosome biogenesis</keyword>
<gene>
    <name evidence="1" type="primary">der</name>
    <name type="synonym">engA</name>
    <name type="ordered locus">Sde_1438</name>
</gene>
<feature type="chain" id="PRO_1000011728" description="GTPase Der">
    <location>
        <begin position="1"/>
        <end position="471"/>
    </location>
</feature>
<feature type="domain" description="EngA-type G 1">
    <location>
        <begin position="3"/>
        <end position="166"/>
    </location>
</feature>
<feature type="domain" description="EngA-type G 2">
    <location>
        <begin position="177"/>
        <end position="350"/>
    </location>
</feature>
<feature type="domain" description="KH-like" evidence="1">
    <location>
        <begin position="351"/>
        <end position="435"/>
    </location>
</feature>
<feature type="region of interest" description="Disordered" evidence="2">
    <location>
        <begin position="432"/>
        <end position="471"/>
    </location>
</feature>
<feature type="binding site" evidence="1">
    <location>
        <begin position="9"/>
        <end position="16"/>
    </location>
    <ligand>
        <name>GTP</name>
        <dbReference type="ChEBI" id="CHEBI:37565"/>
        <label>1</label>
    </ligand>
</feature>
<feature type="binding site" evidence="1">
    <location>
        <begin position="56"/>
        <end position="60"/>
    </location>
    <ligand>
        <name>GTP</name>
        <dbReference type="ChEBI" id="CHEBI:37565"/>
        <label>1</label>
    </ligand>
</feature>
<feature type="binding site" evidence="1">
    <location>
        <begin position="118"/>
        <end position="121"/>
    </location>
    <ligand>
        <name>GTP</name>
        <dbReference type="ChEBI" id="CHEBI:37565"/>
        <label>1</label>
    </ligand>
</feature>
<feature type="binding site" evidence="1">
    <location>
        <begin position="183"/>
        <end position="190"/>
    </location>
    <ligand>
        <name>GTP</name>
        <dbReference type="ChEBI" id="CHEBI:37565"/>
        <label>2</label>
    </ligand>
</feature>
<feature type="binding site" evidence="1">
    <location>
        <begin position="230"/>
        <end position="234"/>
    </location>
    <ligand>
        <name>GTP</name>
        <dbReference type="ChEBI" id="CHEBI:37565"/>
        <label>2</label>
    </ligand>
</feature>
<feature type="binding site" evidence="1">
    <location>
        <begin position="295"/>
        <end position="298"/>
    </location>
    <ligand>
        <name>GTP</name>
        <dbReference type="ChEBI" id="CHEBI:37565"/>
        <label>2</label>
    </ligand>
</feature>
<protein>
    <recommendedName>
        <fullName evidence="1">GTPase Der</fullName>
    </recommendedName>
    <alternativeName>
        <fullName evidence="1">GTP-binding protein EngA</fullName>
    </alternativeName>
</protein>